<gene>
    <name evidence="1" type="primary">spb4</name>
    <name type="ORF">ATEG_04081</name>
</gene>
<feature type="chain" id="PRO_0000282705" description="ATP-dependent rRNA helicase spb4">
    <location>
        <begin position="1"/>
        <end position="639"/>
    </location>
</feature>
<feature type="domain" description="Helicase ATP-binding" evidence="3">
    <location>
        <begin position="45"/>
        <end position="249"/>
    </location>
</feature>
<feature type="domain" description="Helicase C-terminal" evidence="4">
    <location>
        <begin position="283"/>
        <end position="437"/>
    </location>
</feature>
<feature type="region of interest" description="Disordered" evidence="5">
    <location>
        <begin position="536"/>
        <end position="639"/>
    </location>
</feature>
<feature type="coiled-coil region" evidence="2">
    <location>
        <begin position="521"/>
        <end position="624"/>
    </location>
</feature>
<feature type="short sequence motif" description="Q motif" evidence="6">
    <location>
        <begin position="14"/>
        <end position="42"/>
    </location>
</feature>
<feature type="short sequence motif" description="DEAD box" evidence="6">
    <location>
        <begin position="197"/>
        <end position="200"/>
    </location>
</feature>
<feature type="compositionally biased region" description="Basic and acidic residues" evidence="5">
    <location>
        <begin position="575"/>
        <end position="622"/>
    </location>
</feature>
<feature type="compositionally biased region" description="Acidic residues" evidence="5">
    <location>
        <begin position="628"/>
        <end position="639"/>
    </location>
</feature>
<feature type="binding site" evidence="3">
    <location>
        <begin position="58"/>
        <end position="65"/>
    </location>
    <ligand>
        <name>ATP</name>
        <dbReference type="ChEBI" id="CHEBI:30616"/>
    </ligand>
</feature>
<comment type="function">
    <text evidence="1">ATP-binding RNA helicase involved in the biogenesis of 60S ribosomal subunits. Binds 90S pre-ribosomal particles and dissociates from pre-60S ribosomal particles after processing of 27SB pre-rRNA. Required for the normal formation of 18S rRNA through the processing of pre-rRNAs at sites A0, A1 and A2, and the normal formation of 25S and 5.8S rRNAs through the processing of pre-rRNAs at sites C1 and C2.</text>
</comment>
<comment type="catalytic activity">
    <reaction evidence="1">
        <text>ATP + H2O = ADP + phosphate + H(+)</text>
        <dbReference type="Rhea" id="RHEA:13065"/>
        <dbReference type="ChEBI" id="CHEBI:15377"/>
        <dbReference type="ChEBI" id="CHEBI:15378"/>
        <dbReference type="ChEBI" id="CHEBI:30616"/>
        <dbReference type="ChEBI" id="CHEBI:43474"/>
        <dbReference type="ChEBI" id="CHEBI:456216"/>
        <dbReference type="EC" id="3.6.4.13"/>
    </reaction>
</comment>
<comment type="subunit">
    <text evidence="1">Component of pre-60S ribosomal complexes.</text>
</comment>
<comment type="subcellular location">
    <subcellularLocation>
        <location evidence="1">Nucleus</location>
        <location evidence="1">Nucleolus</location>
    </subcellularLocation>
</comment>
<comment type="domain">
    <text>The Q motif is unique to and characteristic of the DEAD box family of RNA helicases and controls ATP binding and hydrolysis.</text>
</comment>
<comment type="similarity">
    <text evidence="6">Belongs to the DEAD box helicase family. DDX55/SPB4 subfamily.</text>
</comment>
<keyword id="KW-0067">ATP-binding</keyword>
<keyword id="KW-0175">Coiled coil</keyword>
<keyword id="KW-0347">Helicase</keyword>
<keyword id="KW-0378">Hydrolase</keyword>
<keyword id="KW-0547">Nucleotide-binding</keyword>
<keyword id="KW-0539">Nucleus</keyword>
<keyword id="KW-1185">Reference proteome</keyword>
<keyword id="KW-0690">Ribosome biogenesis</keyword>
<keyword id="KW-0694">RNA-binding</keyword>
<keyword id="KW-0698">rRNA processing</keyword>
<protein>
    <recommendedName>
        <fullName evidence="6">ATP-dependent rRNA helicase spb4</fullName>
        <ecNumber evidence="1">3.6.4.13</ecNumber>
    </recommendedName>
</protein>
<organism>
    <name type="scientific">Aspergillus terreus (strain NIH 2624 / FGSC A1156)</name>
    <dbReference type="NCBI Taxonomy" id="341663"/>
    <lineage>
        <taxon>Eukaryota</taxon>
        <taxon>Fungi</taxon>
        <taxon>Dikarya</taxon>
        <taxon>Ascomycota</taxon>
        <taxon>Pezizomycotina</taxon>
        <taxon>Eurotiomycetes</taxon>
        <taxon>Eurotiomycetidae</taxon>
        <taxon>Eurotiales</taxon>
        <taxon>Aspergillaceae</taxon>
        <taxon>Aspergillus</taxon>
        <taxon>Aspergillus subgen. Circumdati</taxon>
    </lineage>
</organism>
<evidence type="ECO:0000250" key="1">
    <source>
        <dbReference type="UniProtKB" id="P25808"/>
    </source>
</evidence>
<evidence type="ECO:0000255" key="2"/>
<evidence type="ECO:0000255" key="3">
    <source>
        <dbReference type="PROSITE-ProRule" id="PRU00541"/>
    </source>
</evidence>
<evidence type="ECO:0000255" key="4">
    <source>
        <dbReference type="PROSITE-ProRule" id="PRU00542"/>
    </source>
</evidence>
<evidence type="ECO:0000256" key="5">
    <source>
        <dbReference type="SAM" id="MobiDB-lite"/>
    </source>
</evidence>
<evidence type="ECO:0000305" key="6"/>
<sequence>MAPKPPAGTSSRAWEAVSPSLSEWVLDAVASWGFSKMTPVQASAIPLFMAHKDVVVEAVTGSGKTLSFLVPVVEKLLRLEEPIKKHHIGAIIISPTRELASQIHQVLLSLLAFHPPSAAAIKPPGEDDAPREKFSASTLKVVPQLLLGGSTTPAEDLSYFLKHSPNVLISTPGRLLELLSSPHVHCPQSSFEMLVLDEADRLLDLGFKETLQNILRRLPKQRRTGLFSASISEAVDQIVRVGLRNPVKVLVKVKGTSGVQDKRTPASLQMTYLTTPPAHKFLTLRPILTSLQPTPQKTIFFVSTCSGVDYLAAILPLLLGDDFQLIPLHGKHPANVRQKNFNRFINAHTPSILLTTDVASRGLDIPSVDLVVQIDPPSDPKTFIHRCGRAGRAGRRGVSVVLLHPGREEDYVSFLEVRKTPVTPFPHPISISDSDASTATEAARKIIKQDRALHDRGQKAFVSWLRSYSKHQASSIFRVADLDWEALGHAWGLLKLPKMPELRNFTGDRTLGVDLDWENYAYKDKQREKRRKEVLQESAEAGAQQTSNKRRASESVAWSNKVDQKNKKQKRREQKHLQQEKRRWEKMTEEEKQKARETQKMLEEIRQKNEEARALRRAEKAAGKAADNDGDDDEFEGFD</sequence>
<name>SPB4_ASPTN</name>
<reference key="1">
    <citation type="submission" date="2005-09" db="EMBL/GenBank/DDBJ databases">
        <title>Annotation of the Aspergillus terreus NIH2624 genome.</title>
        <authorList>
            <person name="Birren B.W."/>
            <person name="Lander E.S."/>
            <person name="Galagan J.E."/>
            <person name="Nusbaum C."/>
            <person name="Devon K."/>
            <person name="Henn M."/>
            <person name="Ma L.-J."/>
            <person name="Jaffe D.B."/>
            <person name="Butler J."/>
            <person name="Alvarez P."/>
            <person name="Gnerre S."/>
            <person name="Grabherr M."/>
            <person name="Kleber M."/>
            <person name="Mauceli E.W."/>
            <person name="Brockman W."/>
            <person name="Rounsley S."/>
            <person name="Young S.K."/>
            <person name="LaButti K."/>
            <person name="Pushparaj V."/>
            <person name="DeCaprio D."/>
            <person name="Crawford M."/>
            <person name="Koehrsen M."/>
            <person name="Engels R."/>
            <person name="Montgomery P."/>
            <person name="Pearson M."/>
            <person name="Howarth C."/>
            <person name="Larson L."/>
            <person name="Luoma S."/>
            <person name="White J."/>
            <person name="Alvarado L."/>
            <person name="Kodira C.D."/>
            <person name="Zeng Q."/>
            <person name="Oleary S."/>
            <person name="Yandava C."/>
            <person name="Denning D.W."/>
            <person name="Nierman W.C."/>
            <person name="Milne T."/>
            <person name="Madden K."/>
        </authorList>
    </citation>
    <scope>NUCLEOTIDE SEQUENCE [LARGE SCALE GENOMIC DNA]</scope>
    <source>
        <strain>NIH 2624 / FGSC A1156</strain>
    </source>
</reference>
<proteinExistence type="inferred from homology"/>
<dbReference type="EC" id="3.6.4.13" evidence="1"/>
<dbReference type="EMBL" id="CH476598">
    <property type="protein sequence ID" value="EAU35883.1"/>
    <property type="molecule type" value="Genomic_DNA"/>
</dbReference>
<dbReference type="RefSeq" id="XP_001213259.1">
    <property type="nucleotide sequence ID" value="XM_001213259.1"/>
</dbReference>
<dbReference type="SMR" id="Q0CQF3"/>
<dbReference type="STRING" id="341663.Q0CQF3"/>
<dbReference type="EnsemblFungi" id="EAU35883">
    <property type="protein sequence ID" value="EAU35883"/>
    <property type="gene ID" value="ATEG_04081"/>
</dbReference>
<dbReference type="GeneID" id="4318460"/>
<dbReference type="VEuPathDB" id="FungiDB:ATEG_04081"/>
<dbReference type="eggNOG" id="KOG0345">
    <property type="taxonomic scope" value="Eukaryota"/>
</dbReference>
<dbReference type="HOGENOM" id="CLU_003041_26_4_1"/>
<dbReference type="OMA" id="AYKEHEC"/>
<dbReference type="OrthoDB" id="7396459at2759"/>
<dbReference type="Proteomes" id="UP000007963">
    <property type="component" value="Unassembled WGS sequence"/>
</dbReference>
<dbReference type="GO" id="GO:0030686">
    <property type="term" value="C:90S preribosome"/>
    <property type="evidence" value="ECO:0007669"/>
    <property type="project" value="EnsemblFungi"/>
</dbReference>
<dbReference type="GO" id="GO:0005730">
    <property type="term" value="C:nucleolus"/>
    <property type="evidence" value="ECO:0007669"/>
    <property type="project" value="UniProtKB-SubCell"/>
</dbReference>
<dbReference type="GO" id="GO:0005654">
    <property type="term" value="C:nucleoplasm"/>
    <property type="evidence" value="ECO:0007669"/>
    <property type="project" value="EnsemblFungi"/>
</dbReference>
<dbReference type="GO" id="GO:0030687">
    <property type="term" value="C:preribosome, large subunit precursor"/>
    <property type="evidence" value="ECO:0007669"/>
    <property type="project" value="EnsemblFungi"/>
</dbReference>
<dbReference type="GO" id="GO:0005524">
    <property type="term" value="F:ATP binding"/>
    <property type="evidence" value="ECO:0007669"/>
    <property type="project" value="UniProtKB-KW"/>
</dbReference>
<dbReference type="GO" id="GO:0016887">
    <property type="term" value="F:ATP hydrolysis activity"/>
    <property type="evidence" value="ECO:0007669"/>
    <property type="project" value="RHEA"/>
</dbReference>
<dbReference type="GO" id="GO:0003723">
    <property type="term" value="F:RNA binding"/>
    <property type="evidence" value="ECO:0007669"/>
    <property type="project" value="UniProtKB-KW"/>
</dbReference>
<dbReference type="GO" id="GO:0003724">
    <property type="term" value="F:RNA helicase activity"/>
    <property type="evidence" value="ECO:0007669"/>
    <property type="project" value="UniProtKB-EC"/>
</dbReference>
<dbReference type="GO" id="GO:1902626">
    <property type="term" value="P:assembly of large subunit precursor of preribosome"/>
    <property type="evidence" value="ECO:0007669"/>
    <property type="project" value="EnsemblFungi"/>
</dbReference>
<dbReference type="GO" id="GO:0000470">
    <property type="term" value="P:maturation of LSU-rRNA"/>
    <property type="evidence" value="ECO:0007669"/>
    <property type="project" value="EnsemblFungi"/>
</dbReference>
<dbReference type="CDD" id="cd17960">
    <property type="entry name" value="DEADc_DDX55"/>
    <property type="match status" value="1"/>
</dbReference>
<dbReference type="CDD" id="cd18787">
    <property type="entry name" value="SF2_C_DEAD"/>
    <property type="match status" value="1"/>
</dbReference>
<dbReference type="Gene3D" id="3.40.50.300">
    <property type="entry name" value="P-loop containing nucleotide triphosphate hydrolases"/>
    <property type="match status" value="2"/>
</dbReference>
<dbReference type="InterPro" id="IPR056330">
    <property type="entry name" value="CTT_SPB4"/>
</dbReference>
<dbReference type="InterPro" id="IPR011545">
    <property type="entry name" value="DEAD/DEAH_box_helicase_dom"/>
</dbReference>
<dbReference type="InterPro" id="IPR014001">
    <property type="entry name" value="Helicase_ATP-bd"/>
</dbReference>
<dbReference type="InterPro" id="IPR001650">
    <property type="entry name" value="Helicase_C-like"/>
</dbReference>
<dbReference type="InterPro" id="IPR027417">
    <property type="entry name" value="P-loop_NTPase"/>
</dbReference>
<dbReference type="InterPro" id="IPR000629">
    <property type="entry name" value="RNA-helicase_DEAD-box_CS"/>
</dbReference>
<dbReference type="InterPro" id="IPR014014">
    <property type="entry name" value="RNA_helicase_DEAD_Q_motif"/>
</dbReference>
<dbReference type="InterPro" id="IPR025313">
    <property type="entry name" value="SPB4-like_CTE"/>
</dbReference>
<dbReference type="PANTHER" id="PTHR24031">
    <property type="entry name" value="RNA HELICASE"/>
    <property type="match status" value="1"/>
</dbReference>
<dbReference type="Pfam" id="PF13959">
    <property type="entry name" value="CTE_SPB4"/>
    <property type="match status" value="1"/>
</dbReference>
<dbReference type="Pfam" id="PF23681">
    <property type="entry name" value="CTT_SPB4"/>
    <property type="match status" value="1"/>
</dbReference>
<dbReference type="Pfam" id="PF00270">
    <property type="entry name" value="DEAD"/>
    <property type="match status" value="1"/>
</dbReference>
<dbReference type="Pfam" id="PF00271">
    <property type="entry name" value="Helicase_C"/>
    <property type="match status" value="1"/>
</dbReference>
<dbReference type="SMART" id="SM00487">
    <property type="entry name" value="DEXDc"/>
    <property type="match status" value="1"/>
</dbReference>
<dbReference type="SMART" id="SM01178">
    <property type="entry name" value="DUF4217"/>
    <property type="match status" value="1"/>
</dbReference>
<dbReference type="SMART" id="SM00490">
    <property type="entry name" value="HELICc"/>
    <property type="match status" value="1"/>
</dbReference>
<dbReference type="SUPFAM" id="SSF52540">
    <property type="entry name" value="P-loop containing nucleoside triphosphate hydrolases"/>
    <property type="match status" value="1"/>
</dbReference>
<dbReference type="PROSITE" id="PS00039">
    <property type="entry name" value="DEAD_ATP_HELICASE"/>
    <property type="match status" value="1"/>
</dbReference>
<dbReference type="PROSITE" id="PS51192">
    <property type="entry name" value="HELICASE_ATP_BIND_1"/>
    <property type="match status" value="1"/>
</dbReference>
<dbReference type="PROSITE" id="PS51194">
    <property type="entry name" value="HELICASE_CTER"/>
    <property type="match status" value="1"/>
</dbReference>
<dbReference type="PROSITE" id="PS51195">
    <property type="entry name" value="Q_MOTIF"/>
    <property type="match status" value="1"/>
</dbReference>
<accession>Q0CQF3</accession>